<feature type="chain" id="PRO_0000330443" description="GATA zinc finger domain-containing protein 10">
    <location>
        <begin position="1"/>
        <end position="714"/>
    </location>
</feature>
<feature type="zinc finger region" description="GATA-type" evidence="2">
    <location>
        <begin position="631"/>
        <end position="656"/>
    </location>
</feature>
<feature type="region of interest" description="Disordered" evidence="3">
    <location>
        <begin position="28"/>
        <end position="97"/>
    </location>
</feature>
<feature type="region of interest" description="Disordered" evidence="3">
    <location>
        <begin position="115"/>
        <end position="180"/>
    </location>
</feature>
<feature type="region of interest" description="Disordered" evidence="3">
    <location>
        <begin position="266"/>
        <end position="362"/>
    </location>
</feature>
<feature type="region of interest" description="Disordered" evidence="3">
    <location>
        <begin position="394"/>
        <end position="419"/>
    </location>
</feature>
<feature type="region of interest" description="Disordered" evidence="3">
    <location>
        <begin position="454"/>
        <end position="476"/>
    </location>
</feature>
<feature type="region of interest" description="Disordered" evidence="3">
    <location>
        <begin position="528"/>
        <end position="621"/>
    </location>
</feature>
<feature type="region of interest" description="Disordered" evidence="3">
    <location>
        <begin position="667"/>
        <end position="714"/>
    </location>
</feature>
<feature type="coiled-coil region" evidence="1">
    <location>
        <begin position="661"/>
        <end position="694"/>
    </location>
</feature>
<feature type="compositionally biased region" description="Low complexity" evidence="3">
    <location>
        <begin position="30"/>
        <end position="94"/>
    </location>
</feature>
<feature type="compositionally biased region" description="Low complexity" evidence="3">
    <location>
        <begin position="130"/>
        <end position="147"/>
    </location>
</feature>
<feature type="compositionally biased region" description="Basic residues" evidence="3">
    <location>
        <begin position="148"/>
        <end position="168"/>
    </location>
</feature>
<feature type="compositionally biased region" description="Low complexity" evidence="3">
    <location>
        <begin position="169"/>
        <end position="180"/>
    </location>
</feature>
<feature type="compositionally biased region" description="Polar residues" evidence="3">
    <location>
        <begin position="271"/>
        <end position="282"/>
    </location>
</feature>
<feature type="compositionally biased region" description="Low complexity" evidence="3">
    <location>
        <begin position="283"/>
        <end position="322"/>
    </location>
</feature>
<feature type="compositionally biased region" description="Low complexity" evidence="3">
    <location>
        <begin position="340"/>
        <end position="362"/>
    </location>
</feature>
<feature type="compositionally biased region" description="Low complexity" evidence="3">
    <location>
        <begin position="457"/>
        <end position="476"/>
    </location>
</feature>
<feature type="compositionally biased region" description="Low complexity" evidence="3">
    <location>
        <begin position="528"/>
        <end position="549"/>
    </location>
</feature>
<feature type="compositionally biased region" description="Polar residues" evidence="3">
    <location>
        <begin position="550"/>
        <end position="569"/>
    </location>
</feature>
<feature type="compositionally biased region" description="Low complexity" evidence="3">
    <location>
        <begin position="570"/>
        <end position="588"/>
    </location>
</feature>
<feature type="compositionally biased region" description="Basic and acidic residues" evidence="3">
    <location>
        <begin position="667"/>
        <end position="693"/>
    </location>
</feature>
<feature type="compositionally biased region" description="Polar residues" evidence="3">
    <location>
        <begin position="699"/>
        <end position="714"/>
    </location>
</feature>
<dbReference type="EMBL" id="AAFI02000043">
    <property type="protein sequence ID" value="EAL66474.1"/>
    <property type="molecule type" value="Genomic_DNA"/>
</dbReference>
<dbReference type="RefSeq" id="XP_640446.1">
    <property type="nucleotide sequence ID" value="XM_635354.1"/>
</dbReference>
<dbReference type="SMR" id="Q54TE3"/>
<dbReference type="STRING" id="44689.Q54TE3"/>
<dbReference type="PaxDb" id="44689-DDB0220473"/>
<dbReference type="EnsemblProtists" id="EAL66474">
    <property type="protein sequence ID" value="EAL66474"/>
    <property type="gene ID" value="DDB_G0281829"/>
</dbReference>
<dbReference type="GeneID" id="8623259"/>
<dbReference type="KEGG" id="ddi:DDB_G0281829"/>
<dbReference type="dictyBase" id="DDB_G0281829">
    <property type="gene designation" value="gtaJ"/>
</dbReference>
<dbReference type="VEuPathDB" id="AmoebaDB:DDB_G0281829"/>
<dbReference type="eggNOG" id="KOG1601">
    <property type="taxonomic scope" value="Eukaryota"/>
</dbReference>
<dbReference type="HOGENOM" id="CLU_387061_0_0_1"/>
<dbReference type="InParanoid" id="Q54TE3"/>
<dbReference type="OMA" id="LINCSNG"/>
<dbReference type="PRO" id="PR:Q54TE3"/>
<dbReference type="Proteomes" id="UP000002195">
    <property type="component" value="Chromosome 3"/>
</dbReference>
<dbReference type="GO" id="GO:0005634">
    <property type="term" value="C:nucleus"/>
    <property type="evidence" value="ECO:0000318"/>
    <property type="project" value="GO_Central"/>
</dbReference>
<dbReference type="GO" id="GO:0000976">
    <property type="term" value="F:transcription cis-regulatory region binding"/>
    <property type="evidence" value="ECO:0000318"/>
    <property type="project" value="GO_Central"/>
</dbReference>
<dbReference type="GO" id="GO:0008270">
    <property type="term" value="F:zinc ion binding"/>
    <property type="evidence" value="ECO:0007669"/>
    <property type="project" value="UniProtKB-KW"/>
</dbReference>
<dbReference type="GO" id="GO:0006357">
    <property type="term" value="P:regulation of transcription by RNA polymerase II"/>
    <property type="evidence" value="ECO:0000318"/>
    <property type="project" value="GO_Central"/>
</dbReference>
<dbReference type="CDD" id="cd00202">
    <property type="entry name" value="ZnF_GATA"/>
    <property type="match status" value="1"/>
</dbReference>
<dbReference type="Gene3D" id="3.30.50.10">
    <property type="entry name" value="Erythroid Transcription Factor GATA-1, subunit A"/>
    <property type="match status" value="1"/>
</dbReference>
<dbReference type="InterPro" id="IPR000679">
    <property type="entry name" value="Znf_GATA"/>
</dbReference>
<dbReference type="InterPro" id="IPR013088">
    <property type="entry name" value="Znf_NHR/GATA"/>
</dbReference>
<dbReference type="PANTHER" id="PTHR16148:SF23">
    <property type="entry name" value="B BOX-TYPE DOMAIN-CONTAINING PROTEIN-RELATED"/>
    <property type="match status" value="1"/>
</dbReference>
<dbReference type="PANTHER" id="PTHR16148">
    <property type="entry name" value="NF-KAPPA-B-REPRESSING FACTOR-RELATED"/>
    <property type="match status" value="1"/>
</dbReference>
<dbReference type="Pfam" id="PF00320">
    <property type="entry name" value="GATA"/>
    <property type="match status" value="1"/>
</dbReference>
<dbReference type="SMART" id="SM00401">
    <property type="entry name" value="ZnF_GATA"/>
    <property type="match status" value="1"/>
</dbReference>
<dbReference type="SUPFAM" id="SSF57716">
    <property type="entry name" value="Glucocorticoid receptor-like (DNA-binding domain)"/>
    <property type="match status" value="1"/>
</dbReference>
<dbReference type="PROSITE" id="PS50114">
    <property type="entry name" value="GATA_ZN_FINGER_2"/>
    <property type="match status" value="1"/>
</dbReference>
<protein>
    <recommendedName>
        <fullName>GATA zinc finger domain-containing protein 10</fullName>
    </recommendedName>
</protein>
<proteinExistence type="predicted"/>
<accession>Q54TE3</accession>
<evidence type="ECO:0000255" key="1"/>
<evidence type="ECO:0000255" key="2">
    <source>
        <dbReference type="PROSITE-ProRule" id="PRU00094"/>
    </source>
</evidence>
<evidence type="ECO:0000256" key="3">
    <source>
        <dbReference type="SAM" id="MobiDB-lite"/>
    </source>
</evidence>
<keyword id="KW-0175">Coiled coil</keyword>
<keyword id="KW-0479">Metal-binding</keyword>
<keyword id="KW-1185">Reference proteome</keyword>
<keyword id="KW-0862">Zinc</keyword>
<keyword id="KW-0863">Zinc-finger</keyword>
<organism>
    <name type="scientific">Dictyostelium discoideum</name>
    <name type="common">Social amoeba</name>
    <dbReference type="NCBI Taxonomy" id="44689"/>
    <lineage>
        <taxon>Eukaryota</taxon>
        <taxon>Amoebozoa</taxon>
        <taxon>Evosea</taxon>
        <taxon>Eumycetozoa</taxon>
        <taxon>Dictyostelia</taxon>
        <taxon>Dictyosteliales</taxon>
        <taxon>Dictyosteliaceae</taxon>
        <taxon>Dictyostelium</taxon>
    </lineage>
</organism>
<gene>
    <name type="primary">gtaJ</name>
    <name type="ORF">DDB_G0281829</name>
</gene>
<name>GTAJ_DICDI</name>
<sequence>MTSMSTAATIKLPYQQQQHHLINSNNSYIQQQQQSPQQHHQQSVNINNCNNNTNNNNNNNNNNNNNNNNNNNNNNNNNNNNNNNNINNNNNNNNKQIPQQSIQTHANSILQLNKTMPHVNPPQQNHIMNQQQQQQQQQHYQQQQHPHQQQHPHQQQHPHQQQHPHQQQHPHQQQIQQQQQQQQQQQQQQQQQQQQQQQQQQPQQQQPQTQSTQERKWDEIKIYSDLIKRFALEASHLTISKENYDDLYNMAFCLFKTVDSMDPDKMPMNMGGNSRKNSFDMYNNNNNNNNNNNINNNNNNNNNNNINNNNNNNNNNNNNNNIVYNPYGNDGPTIPSPHLQHQQQHQQQQHQQQHQQQHQQQQQHQQQQQQQQQQQQQQQQQQQQQQQQQQQQQQQQQQQPQYHNGMPHHMQQHSPESMDHQRIVKLPTGNQNNNYSNDYYSIQAVHSPHLGPSMHLQQQQQNQQNQQIQQQHQQIQHQQQYSQLPIEQQQQMMLQQQQQQQQQQQQQQQQQQQQQQLQQQQHHQQQQIQQQQQSIAKQQMPQQQNTPNNGSPSSSDGKSPVNSNTAITSNNNNNNNNNNNNNNNNNNNSTTPVADPQKNFSGEVFFDDIGQDKPQRRRRRTMYSSRRNLKCHYCEVTETPEWRRGPDGDHTLCNACGLHYAKSQKKLAREKELEKQKELEREKERENTRKHSIDFMLMNDTSSAPTNSQNPTPN</sequence>
<reference key="1">
    <citation type="journal article" date="2005" name="Nature">
        <title>The genome of the social amoeba Dictyostelium discoideum.</title>
        <authorList>
            <person name="Eichinger L."/>
            <person name="Pachebat J.A."/>
            <person name="Gloeckner G."/>
            <person name="Rajandream M.A."/>
            <person name="Sucgang R."/>
            <person name="Berriman M."/>
            <person name="Song J."/>
            <person name="Olsen R."/>
            <person name="Szafranski K."/>
            <person name="Xu Q."/>
            <person name="Tunggal B."/>
            <person name="Kummerfeld S."/>
            <person name="Madera M."/>
            <person name="Konfortov B.A."/>
            <person name="Rivero F."/>
            <person name="Bankier A.T."/>
            <person name="Lehmann R."/>
            <person name="Hamlin N."/>
            <person name="Davies R."/>
            <person name="Gaudet P."/>
            <person name="Fey P."/>
            <person name="Pilcher K."/>
            <person name="Chen G."/>
            <person name="Saunders D."/>
            <person name="Sodergren E.J."/>
            <person name="Davis P."/>
            <person name="Kerhornou A."/>
            <person name="Nie X."/>
            <person name="Hall N."/>
            <person name="Anjard C."/>
            <person name="Hemphill L."/>
            <person name="Bason N."/>
            <person name="Farbrother P."/>
            <person name="Desany B."/>
            <person name="Just E."/>
            <person name="Morio T."/>
            <person name="Rost R."/>
            <person name="Churcher C.M."/>
            <person name="Cooper J."/>
            <person name="Haydock S."/>
            <person name="van Driessche N."/>
            <person name="Cronin A."/>
            <person name="Goodhead I."/>
            <person name="Muzny D.M."/>
            <person name="Mourier T."/>
            <person name="Pain A."/>
            <person name="Lu M."/>
            <person name="Harper D."/>
            <person name="Lindsay R."/>
            <person name="Hauser H."/>
            <person name="James K.D."/>
            <person name="Quiles M."/>
            <person name="Madan Babu M."/>
            <person name="Saito T."/>
            <person name="Buchrieser C."/>
            <person name="Wardroper A."/>
            <person name="Felder M."/>
            <person name="Thangavelu M."/>
            <person name="Johnson D."/>
            <person name="Knights A."/>
            <person name="Loulseged H."/>
            <person name="Mungall K.L."/>
            <person name="Oliver K."/>
            <person name="Price C."/>
            <person name="Quail M.A."/>
            <person name="Urushihara H."/>
            <person name="Hernandez J."/>
            <person name="Rabbinowitsch E."/>
            <person name="Steffen D."/>
            <person name="Sanders M."/>
            <person name="Ma J."/>
            <person name="Kohara Y."/>
            <person name="Sharp S."/>
            <person name="Simmonds M.N."/>
            <person name="Spiegler S."/>
            <person name="Tivey A."/>
            <person name="Sugano S."/>
            <person name="White B."/>
            <person name="Walker D."/>
            <person name="Woodward J.R."/>
            <person name="Winckler T."/>
            <person name="Tanaka Y."/>
            <person name="Shaulsky G."/>
            <person name="Schleicher M."/>
            <person name="Weinstock G.M."/>
            <person name="Rosenthal A."/>
            <person name="Cox E.C."/>
            <person name="Chisholm R.L."/>
            <person name="Gibbs R.A."/>
            <person name="Loomis W.F."/>
            <person name="Platzer M."/>
            <person name="Kay R.R."/>
            <person name="Williams J.G."/>
            <person name="Dear P.H."/>
            <person name="Noegel A.A."/>
            <person name="Barrell B.G."/>
            <person name="Kuspa A."/>
        </authorList>
    </citation>
    <scope>NUCLEOTIDE SEQUENCE [LARGE SCALE GENOMIC DNA]</scope>
    <source>
        <strain>AX4</strain>
    </source>
</reference>